<dbReference type="EC" id="4.2.1.9" evidence="1"/>
<dbReference type="EMBL" id="CP000851">
    <property type="protein sequence ID" value="ABV85676.1"/>
    <property type="molecule type" value="Genomic_DNA"/>
</dbReference>
<dbReference type="RefSeq" id="WP_012153617.1">
    <property type="nucleotide sequence ID" value="NC_009901.1"/>
</dbReference>
<dbReference type="SMR" id="A8GZD9"/>
<dbReference type="STRING" id="398579.Spea_0348"/>
<dbReference type="KEGG" id="spl:Spea_0348"/>
<dbReference type="eggNOG" id="COG0129">
    <property type="taxonomic scope" value="Bacteria"/>
</dbReference>
<dbReference type="HOGENOM" id="CLU_014271_4_3_6"/>
<dbReference type="OrthoDB" id="9807077at2"/>
<dbReference type="UniPathway" id="UPA00047">
    <property type="reaction ID" value="UER00057"/>
</dbReference>
<dbReference type="UniPathway" id="UPA00049">
    <property type="reaction ID" value="UER00061"/>
</dbReference>
<dbReference type="Proteomes" id="UP000002608">
    <property type="component" value="Chromosome"/>
</dbReference>
<dbReference type="GO" id="GO:0005829">
    <property type="term" value="C:cytosol"/>
    <property type="evidence" value="ECO:0007669"/>
    <property type="project" value="TreeGrafter"/>
</dbReference>
<dbReference type="GO" id="GO:0051537">
    <property type="term" value="F:2 iron, 2 sulfur cluster binding"/>
    <property type="evidence" value="ECO:0007669"/>
    <property type="project" value="UniProtKB-UniRule"/>
</dbReference>
<dbReference type="GO" id="GO:0004160">
    <property type="term" value="F:dihydroxy-acid dehydratase activity"/>
    <property type="evidence" value="ECO:0007669"/>
    <property type="project" value="UniProtKB-UniRule"/>
</dbReference>
<dbReference type="GO" id="GO:0000287">
    <property type="term" value="F:magnesium ion binding"/>
    <property type="evidence" value="ECO:0007669"/>
    <property type="project" value="UniProtKB-UniRule"/>
</dbReference>
<dbReference type="GO" id="GO:0009097">
    <property type="term" value="P:isoleucine biosynthetic process"/>
    <property type="evidence" value="ECO:0007669"/>
    <property type="project" value="UniProtKB-UniRule"/>
</dbReference>
<dbReference type="GO" id="GO:0009099">
    <property type="term" value="P:L-valine biosynthetic process"/>
    <property type="evidence" value="ECO:0007669"/>
    <property type="project" value="UniProtKB-UniRule"/>
</dbReference>
<dbReference type="FunFam" id="3.50.30.80:FF:000001">
    <property type="entry name" value="Dihydroxy-acid dehydratase"/>
    <property type="match status" value="1"/>
</dbReference>
<dbReference type="Gene3D" id="3.50.30.80">
    <property type="entry name" value="IlvD/EDD C-terminal domain-like"/>
    <property type="match status" value="1"/>
</dbReference>
<dbReference type="HAMAP" id="MF_00012">
    <property type="entry name" value="IlvD"/>
    <property type="match status" value="1"/>
</dbReference>
<dbReference type="InterPro" id="IPR042096">
    <property type="entry name" value="Dihydro-acid_dehy_C"/>
</dbReference>
<dbReference type="InterPro" id="IPR004404">
    <property type="entry name" value="DihydroxyA_deHydtase"/>
</dbReference>
<dbReference type="InterPro" id="IPR020558">
    <property type="entry name" value="DiOHA_6PGluconate_deHydtase_CS"/>
</dbReference>
<dbReference type="InterPro" id="IPR056740">
    <property type="entry name" value="ILV_EDD_C"/>
</dbReference>
<dbReference type="InterPro" id="IPR000581">
    <property type="entry name" value="ILV_EDD_N"/>
</dbReference>
<dbReference type="InterPro" id="IPR037237">
    <property type="entry name" value="IlvD/EDD_N"/>
</dbReference>
<dbReference type="NCBIfam" id="TIGR00110">
    <property type="entry name" value="ilvD"/>
    <property type="match status" value="1"/>
</dbReference>
<dbReference type="NCBIfam" id="NF009103">
    <property type="entry name" value="PRK12448.1"/>
    <property type="match status" value="1"/>
</dbReference>
<dbReference type="PANTHER" id="PTHR43661">
    <property type="entry name" value="D-XYLONATE DEHYDRATASE"/>
    <property type="match status" value="1"/>
</dbReference>
<dbReference type="PANTHER" id="PTHR43661:SF3">
    <property type="entry name" value="D-XYLONATE DEHYDRATASE YAGF-RELATED"/>
    <property type="match status" value="1"/>
</dbReference>
<dbReference type="Pfam" id="PF24877">
    <property type="entry name" value="ILV_EDD_C"/>
    <property type="match status" value="1"/>
</dbReference>
<dbReference type="Pfam" id="PF00920">
    <property type="entry name" value="ILVD_EDD_N"/>
    <property type="match status" value="1"/>
</dbReference>
<dbReference type="SUPFAM" id="SSF143975">
    <property type="entry name" value="IlvD/EDD N-terminal domain-like"/>
    <property type="match status" value="1"/>
</dbReference>
<dbReference type="SUPFAM" id="SSF52016">
    <property type="entry name" value="LeuD/IlvD-like"/>
    <property type="match status" value="1"/>
</dbReference>
<dbReference type="PROSITE" id="PS00886">
    <property type="entry name" value="ILVD_EDD_1"/>
    <property type="match status" value="1"/>
</dbReference>
<dbReference type="PROSITE" id="PS00887">
    <property type="entry name" value="ILVD_EDD_2"/>
    <property type="match status" value="1"/>
</dbReference>
<protein>
    <recommendedName>
        <fullName evidence="1">Dihydroxy-acid dehydratase</fullName>
        <shortName evidence="1">DAD</shortName>
        <ecNumber evidence="1">4.2.1.9</ecNumber>
    </recommendedName>
</protein>
<proteinExistence type="inferred from homology"/>
<evidence type="ECO:0000255" key="1">
    <source>
        <dbReference type="HAMAP-Rule" id="MF_00012"/>
    </source>
</evidence>
<name>ILVD_SHEPA</name>
<comment type="function">
    <text evidence="1">Functions in the biosynthesis of branched-chain amino acids. Catalyzes the dehydration of (2R,3R)-2,3-dihydroxy-3-methylpentanoate (2,3-dihydroxy-3-methylvalerate) into 2-oxo-3-methylpentanoate (2-oxo-3-methylvalerate) and of (2R)-2,3-dihydroxy-3-methylbutanoate (2,3-dihydroxyisovalerate) into 2-oxo-3-methylbutanoate (2-oxoisovalerate), the penultimate precursor to L-isoleucine and L-valine, respectively.</text>
</comment>
<comment type="catalytic activity">
    <reaction evidence="1">
        <text>(2R)-2,3-dihydroxy-3-methylbutanoate = 3-methyl-2-oxobutanoate + H2O</text>
        <dbReference type="Rhea" id="RHEA:24809"/>
        <dbReference type="ChEBI" id="CHEBI:11851"/>
        <dbReference type="ChEBI" id="CHEBI:15377"/>
        <dbReference type="ChEBI" id="CHEBI:49072"/>
        <dbReference type="EC" id="4.2.1.9"/>
    </reaction>
    <physiologicalReaction direction="left-to-right" evidence="1">
        <dbReference type="Rhea" id="RHEA:24810"/>
    </physiologicalReaction>
</comment>
<comment type="catalytic activity">
    <reaction evidence="1">
        <text>(2R,3R)-2,3-dihydroxy-3-methylpentanoate = (S)-3-methyl-2-oxopentanoate + H2O</text>
        <dbReference type="Rhea" id="RHEA:27694"/>
        <dbReference type="ChEBI" id="CHEBI:15377"/>
        <dbReference type="ChEBI" id="CHEBI:35146"/>
        <dbReference type="ChEBI" id="CHEBI:49258"/>
        <dbReference type="EC" id="4.2.1.9"/>
    </reaction>
    <physiologicalReaction direction="left-to-right" evidence="1">
        <dbReference type="Rhea" id="RHEA:27695"/>
    </physiologicalReaction>
</comment>
<comment type="cofactor">
    <cofactor evidence="1">
        <name>[2Fe-2S] cluster</name>
        <dbReference type="ChEBI" id="CHEBI:190135"/>
    </cofactor>
    <text evidence="1">Binds 1 [2Fe-2S] cluster per subunit. This cluster acts as a Lewis acid cofactor.</text>
</comment>
<comment type="cofactor">
    <cofactor evidence="1">
        <name>Mg(2+)</name>
        <dbReference type="ChEBI" id="CHEBI:18420"/>
    </cofactor>
</comment>
<comment type="pathway">
    <text evidence="1">Amino-acid biosynthesis; L-isoleucine biosynthesis; L-isoleucine from 2-oxobutanoate: step 3/4.</text>
</comment>
<comment type="pathway">
    <text evidence="1">Amino-acid biosynthesis; L-valine biosynthesis; L-valine from pyruvate: step 3/4.</text>
</comment>
<comment type="subunit">
    <text evidence="1">Homodimer.</text>
</comment>
<comment type="similarity">
    <text evidence="1">Belongs to the IlvD/Edd family.</text>
</comment>
<gene>
    <name evidence="1" type="primary">ilvD</name>
    <name type="ordered locus">Spea_0348</name>
</gene>
<sequence>MPKLRSATSTEGRNMAGARALWRATGVKDNDFGKPIIAISNSFTQFVPGHVHLKDMGSLVAGAIEEAGGIAKEFNTIAVDDGIAMGHGGMLYSLPSRELIADSVEYMVNAHCADALVCISNCDKITPGMLMASLRLNIPVIFVSGGPMEAGKTKLSDKLIKLDLVDAMVAGADERVSDADSEQIERSACPTCGSCSGMFTANSMNCLTEALGLSLPGNGSMLATHADRRELFLEAGRRIMDLATRYYKHDDESALPRNIANFKAFENAMTLDIAMGGSSNTVLHLLAAAQEAEVDFTMDDIDRLSRLVPHLCKVAPATPKYHMEDVHRAGGVMGILGELDRANLLHNDAYHVAGENLAAVLAKYDIAQSDDAAVRKFFSAGPAGIPTTKAFSQDCRWDSVDDDRQQGCIRSREFAFSQEGGLAVLSGNVAVDGCIVKTAGVEVENHTFIGSARVYESQDDAVAGILGGEVVAGDVVVIRYEGPKGGPGMQEMLYPTSYLKSRGLGTQCALITDGRFSGGTSGLSIGHVSPEAAAGGTIGLVQTGDRIEIDIPARSIKLAISDVELAARRTAMEALGNDAWKPLGRVRHVSMALKAYALLATSADKGAVRDTSKLV</sequence>
<organism>
    <name type="scientific">Shewanella pealeana (strain ATCC 700345 / ANG-SQ1)</name>
    <dbReference type="NCBI Taxonomy" id="398579"/>
    <lineage>
        <taxon>Bacteria</taxon>
        <taxon>Pseudomonadati</taxon>
        <taxon>Pseudomonadota</taxon>
        <taxon>Gammaproteobacteria</taxon>
        <taxon>Alteromonadales</taxon>
        <taxon>Shewanellaceae</taxon>
        <taxon>Shewanella</taxon>
    </lineage>
</organism>
<keyword id="KW-0001">2Fe-2S</keyword>
<keyword id="KW-0028">Amino-acid biosynthesis</keyword>
<keyword id="KW-0100">Branched-chain amino acid biosynthesis</keyword>
<keyword id="KW-0408">Iron</keyword>
<keyword id="KW-0411">Iron-sulfur</keyword>
<keyword id="KW-0456">Lyase</keyword>
<keyword id="KW-0460">Magnesium</keyword>
<keyword id="KW-0479">Metal-binding</keyword>
<keyword id="KW-1185">Reference proteome</keyword>
<reference key="1">
    <citation type="submission" date="2007-10" db="EMBL/GenBank/DDBJ databases">
        <title>Complete sequence of Shewanella pealeana ATCC 700345.</title>
        <authorList>
            <consortium name="US DOE Joint Genome Institute"/>
            <person name="Copeland A."/>
            <person name="Lucas S."/>
            <person name="Lapidus A."/>
            <person name="Barry K."/>
            <person name="Glavina del Rio T."/>
            <person name="Dalin E."/>
            <person name="Tice H."/>
            <person name="Pitluck S."/>
            <person name="Chertkov O."/>
            <person name="Brettin T."/>
            <person name="Bruce D."/>
            <person name="Detter J.C."/>
            <person name="Han C."/>
            <person name="Schmutz J."/>
            <person name="Larimer F."/>
            <person name="Land M."/>
            <person name="Hauser L."/>
            <person name="Kyrpides N."/>
            <person name="Kim E."/>
            <person name="Zhao J.-S.Z."/>
            <person name="Manno D."/>
            <person name="Hawari J."/>
            <person name="Richardson P."/>
        </authorList>
    </citation>
    <scope>NUCLEOTIDE SEQUENCE [LARGE SCALE GENOMIC DNA]</scope>
    <source>
        <strain>ATCC 700345 / ANG-SQ1</strain>
    </source>
</reference>
<feature type="chain" id="PRO_1000073990" description="Dihydroxy-acid dehydratase">
    <location>
        <begin position="1"/>
        <end position="615"/>
    </location>
</feature>
<feature type="active site" description="Proton acceptor" evidence="1">
    <location>
        <position position="517"/>
    </location>
</feature>
<feature type="binding site" evidence="1">
    <location>
        <position position="81"/>
    </location>
    <ligand>
        <name>Mg(2+)</name>
        <dbReference type="ChEBI" id="CHEBI:18420"/>
    </ligand>
</feature>
<feature type="binding site" evidence="1">
    <location>
        <position position="122"/>
    </location>
    <ligand>
        <name>[2Fe-2S] cluster</name>
        <dbReference type="ChEBI" id="CHEBI:190135"/>
    </ligand>
</feature>
<feature type="binding site" evidence="1">
    <location>
        <position position="123"/>
    </location>
    <ligand>
        <name>Mg(2+)</name>
        <dbReference type="ChEBI" id="CHEBI:18420"/>
    </ligand>
</feature>
<feature type="binding site" description="via carbamate group" evidence="1">
    <location>
        <position position="124"/>
    </location>
    <ligand>
        <name>Mg(2+)</name>
        <dbReference type="ChEBI" id="CHEBI:18420"/>
    </ligand>
</feature>
<feature type="binding site" evidence="1">
    <location>
        <position position="195"/>
    </location>
    <ligand>
        <name>[2Fe-2S] cluster</name>
        <dbReference type="ChEBI" id="CHEBI:190135"/>
    </ligand>
</feature>
<feature type="binding site" evidence="1">
    <location>
        <position position="491"/>
    </location>
    <ligand>
        <name>Mg(2+)</name>
        <dbReference type="ChEBI" id="CHEBI:18420"/>
    </ligand>
</feature>
<feature type="modified residue" description="N6-carboxylysine" evidence="1">
    <location>
        <position position="124"/>
    </location>
</feature>
<accession>A8GZD9</accession>